<keyword id="KW-0067">ATP-binding</keyword>
<keyword id="KW-0997">Cell inner membrane</keyword>
<keyword id="KW-1003">Cell membrane</keyword>
<keyword id="KW-0406">Ion transport</keyword>
<keyword id="KW-0460">Magnesium</keyword>
<keyword id="KW-0472">Membrane</keyword>
<keyword id="KW-0479">Metal-binding</keyword>
<keyword id="KW-0547">Nucleotide-binding</keyword>
<keyword id="KW-0597">Phosphoprotein</keyword>
<keyword id="KW-0630">Potassium</keyword>
<keyword id="KW-0633">Potassium transport</keyword>
<keyword id="KW-1185">Reference proteome</keyword>
<keyword id="KW-1278">Translocase</keyword>
<keyword id="KW-0812">Transmembrane</keyword>
<keyword id="KW-1133">Transmembrane helix</keyword>
<keyword id="KW-0813">Transport</keyword>
<organism>
    <name type="scientific">Escherichia coli O45:K1 (strain S88 / ExPEC)</name>
    <dbReference type="NCBI Taxonomy" id="585035"/>
    <lineage>
        <taxon>Bacteria</taxon>
        <taxon>Pseudomonadati</taxon>
        <taxon>Pseudomonadota</taxon>
        <taxon>Gammaproteobacteria</taxon>
        <taxon>Enterobacterales</taxon>
        <taxon>Enterobacteriaceae</taxon>
        <taxon>Escherichia</taxon>
    </lineage>
</organism>
<feature type="chain" id="PRO_1000119408" description="Potassium-transporting ATPase ATP-binding subunit">
    <location>
        <begin position="1"/>
        <end position="682"/>
    </location>
</feature>
<feature type="transmembrane region" description="Helical" evidence="1">
    <location>
        <begin position="34"/>
        <end position="54"/>
    </location>
</feature>
<feature type="transmembrane region" description="Helical" evidence="1">
    <location>
        <begin position="62"/>
        <end position="82"/>
    </location>
</feature>
<feature type="transmembrane region" description="Helical" evidence="1">
    <location>
        <begin position="219"/>
        <end position="239"/>
    </location>
</feature>
<feature type="transmembrane region" description="Helical" evidence="1">
    <location>
        <begin position="254"/>
        <end position="274"/>
    </location>
</feature>
<feature type="transmembrane region" description="Helical" evidence="1">
    <location>
        <begin position="588"/>
        <end position="608"/>
    </location>
</feature>
<feature type="transmembrane region" description="Helical" evidence="1">
    <location>
        <begin position="616"/>
        <end position="636"/>
    </location>
</feature>
<feature type="transmembrane region" description="Helical" evidence="1">
    <location>
        <begin position="656"/>
        <end position="676"/>
    </location>
</feature>
<feature type="active site" description="4-aspartylphosphate intermediate" evidence="1">
    <location>
        <position position="307"/>
    </location>
</feature>
<feature type="binding site" evidence="1">
    <location>
        <position position="344"/>
    </location>
    <ligand>
        <name>ATP</name>
        <dbReference type="ChEBI" id="CHEBI:30616"/>
    </ligand>
</feature>
<feature type="binding site" evidence="1">
    <location>
        <position position="348"/>
    </location>
    <ligand>
        <name>ATP</name>
        <dbReference type="ChEBI" id="CHEBI:30616"/>
    </ligand>
</feature>
<feature type="binding site" evidence="1">
    <location>
        <begin position="377"/>
        <end position="384"/>
    </location>
    <ligand>
        <name>ATP</name>
        <dbReference type="ChEBI" id="CHEBI:30616"/>
    </ligand>
</feature>
<feature type="binding site" evidence="1">
    <location>
        <position position="395"/>
    </location>
    <ligand>
        <name>ATP</name>
        <dbReference type="ChEBI" id="CHEBI:30616"/>
    </ligand>
</feature>
<feature type="binding site" evidence="1">
    <location>
        <position position="518"/>
    </location>
    <ligand>
        <name>Mg(2+)</name>
        <dbReference type="ChEBI" id="CHEBI:18420"/>
    </ligand>
</feature>
<feature type="binding site" evidence="1">
    <location>
        <position position="522"/>
    </location>
    <ligand>
        <name>Mg(2+)</name>
        <dbReference type="ChEBI" id="CHEBI:18420"/>
    </ligand>
</feature>
<accession>B7MFW2</accession>
<name>KDPB_ECO45</name>
<gene>
    <name evidence="1" type="primary">kdpB</name>
    <name type="ordered locus">ECS88_0731</name>
</gene>
<reference key="1">
    <citation type="journal article" date="2009" name="PLoS Genet.">
        <title>Organised genome dynamics in the Escherichia coli species results in highly diverse adaptive paths.</title>
        <authorList>
            <person name="Touchon M."/>
            <person name="Hoede C."/>
            <person name="Tenaillon O."/>
            <person name="Barbe V."/>
            <person name="Baeriswyl S."/>
            <person name="Bidet P."/>
            <person name="Bingen E."/>
            <person name="Bonacorsi S."/>
            <person name="Bouchier C."/>
            <person name="Bouvet O."/>
            <person name="Calteau A."/>
            <person name="Chiapello H."/>
            <person name="Clermont O."/>
            <person name="Cruveiller S."/>
            <person name="Danchin A."/>
            <person name="Diard M."/>
            <person name="Dossat C."/>
            <person name="Karoui M.E."/>
            <person name="Frapy E."/>
            <person name="Garry L."/>
            <person name="Ghigo J.M."/>
            <person name="Gilles A.M."/>
            <person name="Johnson J."/>
            <person name="Le Bouguenec C."/>
            <person name="Lescat M."/>
            <person name="Mangenot S."/>
            <person name="Martinez-Jehanne V."/>
            <person name="Matic I."/>
            <person name="Nassif X."/>
            <person name="Oztas S."/>
            <person name="Petit M.A."/>
            <person name="Pichon C."/>
            <person name="Rouy Z."/>
            <person name="Ruf C.S."/>
            <person name="Schneider D."/>
            <person name="Tourret J."/>
            <person name="Vacherie B."/>
            <person name="Vallenet D."/>
            <person name="Medigue C."/>
            <person name="Rocha E.P.C."/>
            <person name="Denamur E."/>
        </authorList>
    </citation>
    <scope>NUCLEOTIDE SEQUENCE [LARGE SCALE GENOMIC DNA]</scope>
    <source>
        <strain>S88 / ExPEC</strain>
    </source>
</reference>
<protein>
    <recommendedName>
        <fullName evidence="1">Potassium-transporting ATPase ATP-binding subunit</fullName>
        <ecNumber evidence="1">7.2.2.6</ecNumber>
    </recommendedName>
    <alternativeName>
        <fullName evidence="1">ATP phosphohydrolase [potassium-transporting] B chain</fullName>
    </alternativeName>
    <alternativeName>
        <fullName evidence="1">Potassium-binding and translocating subunit B</fullName>
    </alternativeName>
    <alternativeName>
        <fullName evidence="1">Potassium-translocating ATPase B chain</fullName>
    </alternativeName>
</protein>
<proteinExistence type="inferred from homology"/>
<evidence type="ECO:0000255" key="1">
    <source>
        <dbReference type="HAMAP-Rule" id="MF_00285"/>
    </source>
</evidence>
<sequence>MSRKQLALFEPTLVVQALKEAVKKLNPQAQWRNPVMFIVWIGSLLTTCISIAMASDVMPGNALFSAAISGWLWVTVLFANFAEALAEGRSKAQANSLKGVKKTAFARKLREPKYGAAADKVPADQLRKGDIVLVEASDIIPCDGEVIEGGASVDESAITGESAPVIRESGGDFASVTGGTRILSDWLVIECSVNPGETFLDRMIAMVEGAQRRKTPNEIALTILLIALTIVFLLATATLWPFSAWGGNAVSVTVLVALLVCLIPTTIGGLLSAIGVAGMSRMLGANVIATSGRAVEAAGDVDVLLLDKTGTITLGNRQASEFIPAQGVEEKALADAAQLASLADETPEGRSIVILAKQRFNLRERDVQSLHATFVPFTAQSRMSGINIDNRMIRKGSVDAIRRHVEANGGHFPADVDQKVDQVARQGATPLVVVEGSRVLGVIALKDIVKGGIKERFAQLRKMGIKTVMITGDNRLTAAAIAAEAGVDDFLAEATPEAKLALIRQYQAEGRLVAMTGDGTNDAPALAQADVAVAMNSGTQAAKEAGNMVDLDSNPTKLIEVVHIGKQMLMTRGSLTTFSIANDVAKYFAIIPAAFAATYPQLNALNIMRLHSPDSAILSAVIFNALIIVFLIPLALKGVSYKPLTASAMLRRNLWIYGLGGLLVPFIGIKVIDLLLTVCGLV</sequence>
<comment type="function">
    <text evidence="1">Part of the high-affinity ATP-driven potassium transport (or Kdp) system, which catalyzes the hydrolysis of ATP coupled with the electrogenic transport of potassium into the cytoplasm. This subunit is responsible for energy coupling to the transport system and for the release of the potassium ions to the cytoplasm.</text>
</comment>
<comment type="catalytic activity">
    <reaction evidence="1">
        <text>K(+)(out) + ATP + H2O = K(+)(in) + ADP + phosphate + H(+)</text>
        <dbReference type="Rhea" id="RHEA:16777"/>
        <dbReference type="ChEBI" id="CHEBI:15377"/>
        <dbReference type="ChEBI" id="CHEBI:15378"/>
        <dbReference type="ChEBI" id="CHEBI:29103"/>
        <dbReference type="ChEBI" id="CHEBI:30616"/>
        <dbReference type="ChEBI" id="CHEBI:43474"/>
        <dbReference type="ChEBI" id="CHEBI:456216"/>
        <dbReference type="EC" id="7.2.2.6"/>
    </reaction>
    <physiologicalReaction direction="left-to-right" evidence="1">
        <dbReference type="Rhea" id="RHEA:16778"/>
    </physiologicalReaction>
</comment>
<comment type="subunit">
    <text evidence="1">The system is composed of three essential subunits: KdpA, KdpB and KdpC.</text>
</comment>
<comment type="subcellular location">
    <subcellularLocation>
        <location evidence="1">Cell inner membrane</location>
        <topology evidence="1">Multi-pass membrane protein</topology>
    </subcellularLocation>
</comment>
<comment type="similarity">
    <text evidence="1">Belongs to the cation transport ATPase (P-type) (TC 3.A.3) family. Type IA subfamily.</text>
</comment>
<dbReference type="EC" id="7.2.2.6" evidence="1"/>
<dbReference type="EMBL" id="CU928161">
    <property type="protein sequence ID" value="CAR02071.1"/>
    <property type="molecule type" value="Genomic_DNA"/>
</dbReference>
<dbReference type="RefSeq" id="WP_000087931.1">
    <property type="nucleotide sequence ID" value="NC_011742.1"/>
</dbReference>
<dbReference type="SMR" id="B7MFW2"/>
<dbReference type="KEGG" id="ecz:ECS88_0731"/>
<dbReference type="HOGENOM" id="CLU_025728_2_0_6"/>
<dbReference type="Proteomes" id="UP000000747">
    <property type="component" value="Chromosome"/>
</dbReference>
<dbReference type="GO" id="GO:0005886">
    <property type="term" value="C:plasma membrane"/>
    <property type="evidence" value="ECO:0007669"/>
    <property type="project" value="UniProtKB-SubCell"/>
</dbReference>
<dbReference type="GO" id="GO:0005524">
    <property type="term" value="F:ATP binding"/>
    <property type="evidence" value="ECO:0007669"/>
    <property type="project" value="UniProtKB-UniRule"/>
</dbReference>
<dbReference type="GO" id="GO:0016887">
    <property type="term" value="F:ATP hydrolysis activity"/>
    <property type="evidence" value="ECO:0007669"/>
    <property type="project" value="InterPro"/>
</dbReference>
<dbReference type="GO" id="GO:0000287">
    <property type="term" value="F:magnesium ion binding"/>
    <property type="evidence" value="ECO:0007669"/>
    <property type="project" value="UniProtKB-UniRule"/>
</dbReference>
<dbReference type="GO" id="GO:0008556">
    <property type="term" value="F:P-type potassium transmembrane transporter activity"/>
    <property type="evidence" value="ECO:0007669"/>
    <property type="project" value="UniProtKB-UniRule"/>
</dbReference>
<dbReference type="CDD" id="cd02078">
    <property type="entry name" value="P-type_ATPase_K"/>
    <property type="match status" value="1"/>
</dbReference>
<dbReference type="FunFam" id="2.70.150.10:FF:000010">
    <property type="entry name" value="Potassium-transporting ATPase ATP-binding subunit"/>
    <property type="match status" value="1"/>
</dbReference>
<dbReference type="FunFam" id="3.40.1110.10:FF:000007">
    <property type="entry name" value="Potassium-transporting ATPase ATP-binding subunit"/>
    <property type="match status" value="1"/>
</dbReference>
<dbReference type="Gene3D" id="3.40.1110.10">
    <property type="entry name" value="Calcium-transporting ATPase, cytoplasmic domain N"/>
    <property type="match status" value="1"/>
</dbReference>
<dbReference type="Gene3D" id="2.70.150.10">
    <property type="entry name" value="Calcium-transporting ATPase, cytoplasmic transduction domain A"/>
    <property type="match status" value="1"/>
</dbReference>
<dbReference type="Gene3D" id="3.40.50.1000">
    <property type="entry name" value="HAD superfamily/HAD-like"/>
    <property type="match status" value="1"/>
</dbReference>
<dbReference type="HAMAP" id="MF_00285">
    <property type="entry name" value="KdpB"/>
    <property type="match status" value="1"/>
</dbReference>
<dbReference type="InterPro" id="IPR023299">
    <property type="entry name" value="ATPase_P-typ_cyto_dom_N"/>
</dbReference>
<dbReference type="InterPro" id="IPR018303">
    <property type="entry name" value="ATPase_P-typ_P_site"/>
</dbReference>
<dbReference type="InterPro" id="IPR023298">
    <property type="entry name" value="ATPase_P-typ_TM_dom_sf"/>
</dbReference>
<dbReference type="InterPro" id="IPR008250">
    <property type="entry name" value="ATPase_P-typ_transduc_dom_A_sf"/>
</dbReference>
<dbReference type="InterPro" id="IPR036412">
    <property type="entry name" value="HAD-like_sf"/>
</dbReference>
<dbReference type="InterPro" id="IPR023214">
    <property type="entry name" value="HAD_sf"/>
</dbReference>
<dbReference type="InterPro" id="IPR006391">
    <property type="entry name" value="P-type_ATPase_bsu_IA"/>
</dbReference>
<dbReference type="InterPro" id="IPR001757">
    <property type="entry name" value="P_typ_ATPase"/>
</dbReference>
<dbReference type="InterPro" id="IPR044492">
    <property type="entry name" value="P_typ_ATPase_HD_dom"/>
</dbReference>
<dbReference type="NCBIfam" id="TIGR01494">
    <property type="entry name" value="ATPase_P-type"/>
    <property type="match status" value="2"/>
</dbReference>
<dbReference type="NCBIfam" id="TIGR01497">
    <property type="entry name" value="kdpB"/>
    <property type="match status" value="1"/>
</dbReference>
<dbReference type="PANTHER" id="PTHR43743">
    <property type="entry name" value="POTASSIUM-TRANSPORTING ATPASE ATP-BINDING SUBUNIT"/>
    <property type="match status" value="1"/>
</dbReference>
<dbReference type="PANTHER" id="PTHR43743:SF1">
    <property type="entry name" value="POTASSIUM-TRANSPORTING ATPASE ATP-BINDING SUBUNIT"/>
    <property type="match status" value="1"/>
</dbReference>
<dbReference type="Pfam" id="PF00122">
    <property type="entry name" value="E1-E2_ATPase"/>
    <property type="match status" value="1"/>
</dbReference>
<dbReference type="Pfam" id="PF00702">
    <property type="entry name" value="Hydrolase"/>
    <property type="match status" value="1"/>
</dbReference>
<dbReference type="PRINTS" id="PR00119">
    <property type="entry name" value="CATATPASE"/>
</dbReference>
<dbReference type="SFLD" id="SFLDS00003">
    <property type="entry name" value="Haloacid_Dehalogenase"/>
    <property type="match status" value="1"/>
</dbReference>
<dbReference type="SFLD" id="SFLDF00027">
    <property type="entry name" value="p-type_atpase"/>
    <property type="match status" value="1"/>
</dbReference>
<dbReference type="SUPFAM" id="SSF81653">
    <property type="entry name" value="Calcium ATPase, transduction domain A"/>
    <property type="match status" value="1"/>
</dbReference>
<dbReference type="SUPFAM" id="SSF81665">
    <property type="entry name" value="Calcium ATPase, transmembrane domain M"/>
    <property type="match status" value="1"/>
</dbReference>
<dbReference type="SUPFAM" id="SSF56784">
    <property type="entry name" value="HAD-like"/>
    <property type="match status" value="1"/>
</dbReference>
<dbReference type="SUPFAM" id="SSF81660">
    <property type="entry name" value="Metal cation-transporting ATPase, ATP-binding domain N"/>
    <property type="match status" value="1"/>
</dbReference>
<dbReference type="PROSITE" id="PS00154">
    <property type="entry name" value="ATPASE_E1_E2"/>
    <property type="match status" value="1"/>
</dbReference>